<evidence type="ECO:0000255" key="1">
    <source>
        <dbReference type="HAMAP-Rule" id="MF_00577"/>
    </source>
</evidence>
<dbReference type="EC" id="4.2.1.49" evidence="1"/>
<dbReference type="EMBL" id="CP000001">
    <property type="protein sequence ID" value="AAU16912.1"/>
    <property type="molecule type" value="Genomic_DNA"/>
</dbReference>
<dbReference type="RefSeq" id="WP_000416949.1">
    <property type="nucleotide sequence ID" value="NZ_CP009968.1"/>
</dbReference>
<dbReference type="SMR" id="Q637H9"/>
<dbReference type="KEGG" id="bcz:BCE33L3353"/>
<dbReference type="PATRIC" id="fig|288681.22.peg.2070"/>
<dbReference type="UniPathway" id="UPA00379">
    <property type="reaction ID" value="UER00550"/>
</dbReference>
<dbReference type="Proteomes" id="UP000002612">
    <property type="component" value="Chromosome"/>
</dbReference>
<dbReference type="GO" id="GO:0005737">
    <property type="term" value="C:cytoplasm"/>
    <property type="evidence" value="ECO:0007669"/>
    <property type="project" value="UniProtKB-SubCell"/>
</dbReference>
<dbReference type="GO" id="GO:0016153">
    <property type="term" value="F:urocanate hydratase activity"/>
    <property type="evidence" value="ECO:0007669"/>
    <property type="project" value="UniProtKB-UniRule"/>
</dbReference>
<dbReference type="GO" id="GO:0019556">
    <property type="term" value="P:L-histidine catabolic process to glutamate and formamide"/>
    <property type="evidence" value="ECO:0007669"/>
    <property type="project" value="UniProtKB-UniPathway"/>
</dbReference>
<dbReference type="GO" id="GO:0019557">
    <property type="term" value="P:L-histidine catabolic process to glutamate and formate"/>
    <property type="evidence" value="ECO:0007669"/>
    <property type="project" value="UniProtKB-UniPathway"/>
</dbReference>
<dbReference type="FunFam" id="3.40.50.10730:FF:000001">
    <property type="entry name" value="Urocanate hydratase"/>
    <property type="match status" value="1"/>
</dbReference>
<dbReference type="Gene3D" id="3.40.50.10730">
    <property type="entry name" value="Urocanase like domains"/>
    <property type="match status" value="1"/>
</dbReference>
<dbReference type="Gene3D" id="3.40.1770.10">
    <property type="entry name" value="Urocanase superfamily"/>
    <property type="match status" value="1"/>
</dbReference>
<dbReference type="HAMAP" id="MF_00577">
    <property type="entry name" value="HutU"/>
    <property type="match status" value="1"/>
</dbReference>
<dbReference type="InterPro" id="IPR055351">
    <property type="entry name" value="Urocanase"/>
</dbReference>
<dbReference type="InterPro" id="IPR023637">
    <property type="entry name" value="Urocanase-like"/>
</dbReference>
<dbReference type="InterPro" id="IPR035401">
    <property type="entry name" value="Urocanase_C"/>
</dbReference>
<dbReference type="InterPro" id="IPR038364">
    <property type="entry name" value="Urocanase_central_sf"/>
</dbReference>
<dbReference type="InterPro" id="IPR023636">
    <property type="entry name" value="Urocanase_CS"/>
</dbReference>
<dbReference type="InterPro" id="IPR035400">
    <property type="entry name" value="Urocanase_N"/>
</dbReference>
<dbReference type="InterPro" id="IPR035085">
    <property type="entry name" value="Urocanase_Rossmann-like"/>
</dbReference>
<dbReference type="InterPro" id="IPR036190">
    <property type="entry name" value="Urocanase_sf"/>
</dbReference>
<dbReference type="NCBIfam" id="TIGR01228">
    <property type="entry name" value="hutU"/>
    <property type="match status" value="1"/>
</dbReference>
<dbReference type="NCBIfam" id="NF003820">
    <property type="entry name" value="PRK05414.1"/>
    <property type="match status" value="1"/>
</dbReference>
<dbReference type="PANTHER" id="PTHR12216">
    <property type="entry name" value="UROCANATE HYDRATASE"/>
    <property type="match status" value="1"/>
</dbReference>
<dbReference type="PANTHER" id="PTHR12216:SF4">
    <property type="entry name" value="UROCANATE HYDRATASE"/>
    <property type="match status" value="1"/>
</dbReference>
<dbReference type="Pfam" id="PF01175">
    <property type="entry name" value="Urocanase"/>
    <property type="match status" value="1"/>
</dbReference>
<dbReference type="Pfam" id="PF17392">
    <property type="entry name" value="Urocanase_C"/>
    <property type="match status" value="1"/>
</dbReference>
<dbReference type="Pfam" id="PF17391">
    <property type="entry name" value="Urocanase_N"/>
    <property type="match status" value="1"/>
</dbReference>
<dbReference type="PIRSF" id="PIRSF001423">
    <property type="entry name" value="Urocanate_hydrat"/>
    <property type="match status" value="1"/>
</dbReference>
<dbReference type="SUPFAM" id="SSF111326">
    <property type="entry name" value="Urocanase"/>
    <property type="match status" value="1"/>
</dbReference>
<dbReference type="PROSITE" id="PS01233">
    <property type="entry name" value="UROCANASE"/>
    <property type="match status" value="1"/>
</dbReference>
<organism>
    <name type="scientific">Bacillus cereus (strain ZK / E33L)</name>
    <dbReference type="NCBI Taxonomy" id="288681"/>
    <lineage>
        <taxon>Bacteria</taxon>
        <taxon>Bacillati</taxon>
        <taxon>Bacillota</taxon>
        <taxon>Bacilli</taxon>
        <taxon>Bacillales</taxon>
        <taxon>Bacillaceae</taxon>
        <taxon>Bacillus</taxon>
        <taxon>Bacillus cereus group</taxon>
    </lineage>
</organism>
<name>HUTU_BACCZ</name>
<proteinExistence type="inferred from homology"/>
<accession>Q637H9</accession>
<gene>
    <name evidence="1" type="primary">hutU</name>
    <name type="ordered locus">BCE33L3353</name>
</gene>
<reference key="1">
    <citation type="journal article" date="2006" name="J. Bacteriol.">
        <title>Pathogenomic sequence analysis of Bacillus cereus and Bacillus thuringiensis isolates closely related to Bacillus anthracis.</title>
        <authorList>
            <person name="Han C.S."/>
            <person name="Xie G."/>
            <person name="Challacombe J.F."/>
            <person name="Altherr M.R."/>
            <person name="Bhotika S.S."/>
            <person name="Bruce D."/>
            <person name="Campbell C.S."/>
            <person name="Campbell M.L."/>
            <person name="Chen J."/>
            <person name="Chertkov O."/>
            <person name="Cleland C."/>
            <person name="Dimitrijevic M."/>
            <person name="Doggett N.A."/>
            <person name="Fawcett J.J."/>
            <person name="Glavina T."/>
            <person name="Goodwin L.A."/>
            <person name="Hill K.K."/>
            <person name="Hitchcock P."/>
            <person name="Jackson P.J."/>
            <person name="Keim P."/>
            <person name="Kewalramani A.R."/>
            <person name="Longmire J."/>
            <person name="Lucas S."/>
            <person name="Malfatti S."/>
            <person name="McMurry K."/>
            <person name="Meincke L.J."/>
            <person name="Misra M."/>
            <person name="Moseman B.L."/>
            <person name="Mundt M."/>
            <person name="Munk A.C."/>
            <person name="Okinaka R.T."/>
            <person name="Parson-Quintana B."/>
            <person name="Reilly L.P."/>
            <person name="Richardson P."/>
            <person name="Robinson D.L."/>
            <person name="Rubin E."/>
            <person name="Saunders E."/>
            <person name="Tapia R."/>
            <person name="Tesmer J.G."/>
            <person name="Thayer N."/>
            <person name="Thompson L.S."/>
            <person name="Tice H."/>
            <person name="Ticknor L.O."/>
            <person name="Wills P.L."/>
            <person name="Brettin T.S."/>
            <person name="Gilna P."/>
        </authorList>
    </citation>
    <scope>NUCLEOTIDE SEQUENCE [LARGE SCALE GENOMIC DNA]</scope>
    <source>
        <strain>ZK / E33L</strain>
    </source>
</reference>
<feature type="chain" id="PRO_1000025118" description="Urocanate hydratase">
    <location>
        <begin position="1"/>
        <end position="552"/>
    </location>
</feature>
<feature type="active site" evidence="1">
    <location>
        <position position="407"/>
    </location>
</feature>
<feature type="binding site" evidence="1">
    <location>
        <begin position="49"/>
        <end position="50"/>
    </location>
    <ligand>
        <name>NAD(+)</name>
        <dbReference type="ChEBI" id="CHEBI:57540"/>
    </ligand>
</feature>
<feature type="binding site" evidence="1">
    <location>
        <position position="127"/>
    </location>
    <ligand>
        <name>NAD(+)</name>
        <dbReference type="ChEBI" id="CHEBI:57540"/>
    </ligand>
</feature>
<feature type="binding site" evidence="1">
    <location>
        <begin position="173"/>
        <end position="175"/>
    </location>
    <ligand>
        <name>NAD(+)</name>
        <dbReference type="ChEBI" id="CHEBI:57540"/>
    </ligand>
</feature>
<feature type="binding site" evidence="1">
    <location>
        <position position="193"/>
    </location>
    <ligand>
        <name>NAD(+)</name>
        <dbReference type="ChEBI" id="CHEBI:57540"/>
    </ligand>
</feature>
<feature type="binding site" evidence="1">
    <location>
        <begin position="239"/>
        <end position="240"/>
    </location>
    <ligand>
        <name>NAD(+)</name>
        <dbReference type="ChEBI" id="CHEBI:57540"/>
    </ligand>
</feature>
<feature type="binding site" evidence="1">
    <location>
        <begin position="260"/>
        <end position="264"/>
    </location>
    <ligand>
        <name>NAD(+)</name>
        <dbReference type="ChEBI" id="CHEBI:57540"/>
    </ligand>
</feature>
<feature type="binding site" evidence="1">
    <location>
        <begin position="270"/>
        <end position="271"/>
    </location>
    <ligand>
        <name>NAD(+)</name>
        <dbReference type="ChEBI" id="CHEBI:57540"/>
    </ligand>
</feature>
<feature type="binding site" evidence="1">
    <location>
        <position position="319"/>
    </location>
    <ligand>
        <name>NAD(+)</name>
        <dbReference type="ChEBI" id="CHEBI:57540"/>
    </ligand>
</feature>
<feature type="binding site" evidence="1">
    <location>
        <position position="489"/>
    </location>
    <ligand>
        <name>NAD(+)</name>
        <dbReference type="ChEBI" id="CHEBI:57540"/>
    </ligand>
</feature>
<comment type="function">
    <text evidence="1">Catalyzes the conversion of urocanate to 4-imidazolone-5-propionate.</text>
</comment>
<comment type="catalytic activity">
    <reaction evidence="1">
        <text>4-imidazolone-5-propanoate = trans-urocanate + H2O</text>
        <dbReference type="Rhea" id="RHEA:13101"/>
        <dbReference type="ChEBI" id="CHEBI:15377"/>
        <dbReference type="ChEBI" id="CHEBI:17771"/>
        <dbReference type="ChEBI" id="CHEBI:77893"/>
        <dbReference type="EC" id="4.2.1.49"/>
    </reaction>
</comment>
<comment type="cofactor">
    <cofactor evidence="1">
        <name>NAD(+)</name>
        <dbReference type="ChEBI" id="CHEBI:57540"/>
    </cofactor>
    <text evidence="1">Binds 1 NAD(+) per subunit.</text>
</comment>
<comment type="pathway">
    <text evidence="1">Amino-acid degradation; L-histidine degradation into L-glutamate; N-formimidoyl-L-glutamate from L-histidine: step 2/3.</text>
</comment>
<comment type="subcellular location">
    <subcellularLocation>
        <location evidence="1">Cytoplasm</location>
    </subcellularLocation>
</comment>
<comment type="similarity">
    <text evidence="1">Belongs to the urocanase family.</text>
</comment>
<keyword id="KW-0963">Cytoplasm</keyword>
<keyword id="KW-0369">Histidine metabolism</keyword>
<keyword id="KW-0456">Lyase</keyword>
<keyword id="KW-0520">NAD</keyword>
<protein>
    <recommendedName>
        <fullName evidence="1">Urocanate hydratase</fullName>
        <shortName evidence="1">Urocanase</shortName>
        <ecNumber evidence="1">4.2.1.49</ecNumber>
    </recommendedName>
    <alternativeName>
        <fullName evidence="1">Imidazolonepropionate hydrolase</fullName>
    </alternativeName>
</protein>
<sequence>MEKVQQTIRAPRGTELQTKGWVQEAALRMLMNNLDPEVAEKPEELVVYGGIGRAARNWESYQAIVDSLKTLESDETLLVQSGKPVAIFKSHEDAPRVLLANSNLVPKWANWDHFRELEKKGLMMYGQMTAGSWIYIGTQGILQGTYETFGEAARQHFGGSLKGTLTLTAGLGGMGGAQPLAVTMNGGVVIAIDVDKRSIDRRIEKRYCDMYTESLEEALAVANEYKEKKEPISIGLLGNAAEILPELVKRNITPDLVTDQTSAHDPLNGYIPVGYTLEEAAKLREEDPERYVQLSKESMTKHVEAMLAMQEKGAITFDYGNNIRQVAFDEGLKNAFDFPGFVPAFIRPLFCEGKGPFRWVALSGDPEDIYKTDEVILREFADNEHLCNWIRMARQQVEFQGLPSRICWLGYGERAKFGRIINEMVANGELSAPIVIGRDHLDCGSVASPNRETEAMKDGSDAVADWPILNALINSVNGASWVSVHHGGGVGMGYSLHAGMVIVADGTEAAAKRIERVLTSDPGMGVVRHVDAGYDLAVETAKEKGVNIPMMK</sequence>